<protein>
    <recommendedName>
        <fullName evidence="1">Arginine deiminase</fullName>
        <shortName evidence="1">ADI</shortName>
        <ecNumber evidence="1">3.5.3.6</ecNumber>
    </recommendedName>
    <alternativeName>
        <fullName evidence="1">Arginine dihydrolase</fullName>
        <shortName evidence="1">AD</shortName>
    </alternativeName>
</protein>
<sequence length="402" mass="43230">MTDAPLGCNSEVGTLRAVILHRPGAELQRLTPRNNDTLLFDGLPWVARAQQEHDAFADLLRSRGVEVLLLGDLLTEALDKSGAARMQGISAAVDARRLGAPLAQELSAYLRTLEAAPLARILMAGMTFDELPFGENELSLVRRMHHGGDFVIDPLPNLLFTRDSSFWIGPRVAITSLSMHARVRETSLTDLIYAHHPRFLRVRRAYESRSAPIEGGDVLLLAPGVVAVGVGERTTPAGAEALARSLFDDDLAHTVLAVPIAQERAQMHLDTVCTMVDTDAVVMYPNIQDSLTAFPIRRKSGGVTIDRAAPFVDAAADAMGIGKLRVIDTGLDPVTAEREQWDDGNNTLALAPGVVVAYERNTETNARLADSGIEVLPIAASELGTGRGGPRCMSCPAGRDPL</sequence>
<accession>A4T6Q0</accession>
<gene>
    <name evidence="1" type="primary">arcA</name>
    <name type="ordered locus">Mflv_1923</name>
</gene>
<name>ARCA_MYCGI</name>
<comment type="catalytic activity">
    <reaction evidence="1">
        <text>L-arginine + H2O = L-citrulline + NH4(+)</text>
        <dbReference type="Rhea" id="RHEA:19597"/>
        <dbReference type="ChEBI" id="CHEBI:15377"/>
        <dbReference type="ChEBI" id="CHEBI:28938"/>
        <dbReference type="ChEBI" id="CHEBI:32682"/>
        <dbReference type="ChEBI" id="CHEBI:57743"/>
        <dbReference type="EC" id="3.5.3.6"/>
    </reaction>
</comment>
<comment type="pathway">
    <text evidence="1">Amino-acid degradation; L-arginine degradation via ADI pathway; carbamoyl phosphate from L-arginine: step 1/2.</text>
</comment>
<comment type="subcellular location">
    <subcellularLocation>
        <location evidence="1">Cytoplasm</location>
    </subcellularLocation>
</comment>
<comment type="similarity">
    <text evidence="1">Belongs to the arginine deiminase family.</text>
</comment>
<feature type="chain" id="PRO_0000336668" description="Arginine deiminase">
    <location>
        <begin position="1"/>
        <end position="402"/>
    </location>
</feature>
<feature type="active site" description="Amidino-cysteine intermediate" evidence="1">
    <location>
        <position position="392"/>
    </location>
</feature>
<proteinExistence type="inferred from homology"/>
<evidence type="ECO:0000255" key="1">
    <source>
        <dbReference type="HAMAP-Rule" id="MF_00242"/>
    </source>
</evidence>
<dbReference type="EC" id="3.5.3.6" evidence="1"/>
<dbReference type="EMBL" id="CP000656">
    <property type="protein sequence ID" value="ABP44403.1"/>
    <property type="molecule type" value="Genomic_DNA"/>
</dbReference>
<dbReference type="SMR" id="A4T6Q0"/>
<dbReference type="STRING" id="350054.Mflv_1923"/>
<dbReference type="KEGG" id="mgi:Mflv_1923"/>
<dbReference type="eggNOG" id="COG2235">
    <property type="taxonomic scope" value="Bacteria"/>
</dbReference>
<dbReference type="HOGENOM" id="CLU_052662_0_1_11"/>
<dbReference type="OrthoDB" id="9807502at2"/>
<dbReference type="UniPathway" id="UPA00254">
    <property type="reaction ID" value="UER00364"/>
</dbReference>
<dbReference type="GO" id="GO:0005737">
    <property type="term" value="C:cytoplasm"/>
    <property type="evidence" value="ECO:0007669"/>
    <property type="project" value="UniProtKB-SubCell"/>
</dbReference>
<dbReference type="GO" id="GO:0016990">
    <property type="term" value="F:arginine deiminase activity"/>
    <property type="evidence" value="ECO:0007669"/>
    <property type="project" value="UniProtKB-UniRule"/>
</dbReference>
<dbReference type="GO" id="GO:0019547">
    <property type="term" value="P:arginine catabolic process to ornithine"/>
    <property type="evidence" value="ECO:0007669"/>
    <property type="project" value="UniProtKB-UniRule"/>
</dbReference>
<dbReference type="GO" id="GO:0019546">
    <property type="term" value="P:arginine deiminase pathway"/>
    <property type="evidence" value="ECO:0007669"/>
    <property type="project" value="TreeGrafter"/>
</dbReference>
<dbReference type="Gene3D" id="1.10.3930.10">
    <property type="entry name" value="Arginine deiminase"/>
    <property type="match status" value="1"/>
</dbReference>
<dbReference type="Gene3D" id="3.75.10.10">
    <property type="entry name" value="L-arginine/glycine Amidinotransferase, Chain A"/>
    <property type="match status" value="1"/>
</dbReference>
<dbReference type="HAMAP" id="MF_00242">
    <property type="entry name" value="Arg_deiminase"/>
    <property type="match status" value="1"/>
</dbReference>
<dbReference type="InterPro" id="IPR003876">
    <property type="entry name" value="Arg_deiminase"/>
</dbReference>
<dbReference type="NCBIfam" id="TIGR01078">
    <property type="entry name" value="arcA"/>
    <property type="match status" value="1"/>
</dbReference>
<dbReference type="NCBIfam" id="NF002381">
    <property type="entry name" value="PRK01388.1"/>
    <property type="match status" value="1"/>
</dbReference>
<dbReference type="PANTHER" id="PTHR47271">
    <property type="entry name" value="ARGININE DEIMINASE"/>
    <property type="match status" value="1"/>
</dbReference>
<dbReference type="PANTHER" id="PTHR47271:SF2">
    <property type="entry name" value="ARGININE DEIMINASE"/>
    <property type="match status" value="1"/>
</dbReference>
<dbReference type="Pfam" id="PF02274">
    <property type="entry name" value="ADI"/>
    <property type="match status" value="1"/>
</dbReference>
<dbReference type="PIRSF" id="PIRSF006356">
    <property type="entry name" value="Arg_deiminase"/>
    <property type="match status" value="1"/>
</dbReference>
<dbReference type="PRINTS" id="PR01466">
    <property type="entry name" value="ARGDEIMINASE"/>
</dbReference>
<dbReference type="SUPFAM" id="SSF55909">
    <property type="entry name" value="Pentein"/>
    <property type="match status" value="1"/>
</dbReference>
<reference key="1">
    <citation type="submission" date="2007-04" db="EMBL/GenBank/DDBJ databases">
        <title>Complete sequence of chromosome of Mycobacterium gilvum PYR-GCK.</title>
        <authorList>
            <consortium name="US DOE Joint Genome Institute"/>
            <person name="Copeland A."/>
            <person name="Lucas S."/>
            <person name="Lapidus A."/>
            <person name="Barry K."/>
            <person name="Detter J.C."/>
            <person name="Glavina del Rio T."/>
            <person name="Hammon N."/>
            <person name="Israni S."/>
            <person name="Dalin E."/>
            <person name="Tice H."/>
            <person name="Pitluck S."/>
            <person name="Chain P."/>
            <person name="Malfatti S."/>
            <person name="Shin M."/>
            <person name="Vergez L."/>
            <person name="Schmutz J."/>
            <person name="Larimer F."/>
            <person name="Land M."/>
            <person name="Hauser L."/>
            <person name="Kyrpides N."/>
            <person name="Mikhailova N."/>
            <person name="Miller C."/>
            <person name="Richardson P."/>
        </authorList>
    </citation>
    <scope>NUCLEOTIDE SEQUENCE [LARGE SCALE GENOMIC DNA]</scope>
    <source>
        <strain>PYR-GCK</strain>
    </source>
</reference>
<keyword id="KW-0056">Arginine metabolism</keyword>
<keyword id="KW-0963">Cytoplasm</keyword>
<keyword id="KW-0378">Hydrolase</keyword>
<organism>
    <name type="scientific">Mycolicibacterium gilvum (strain PYR-GCK)</name>
    <name type="common">Mycobacterium gilvum (strain PYR-GCK)</name>
    <dbReference type="NCBI Taxonomy" id="350054"/>
    <lineage>
        <taxon>Bacteria</taxon>
        <taxon>Bacillati</taxon>
        <taxon>Actinomycetota</taxon>
        <taxon>Actinomycetes</taxon>
        <taxon>Mycobacteriales</taxon>
        <taxon>Mycobacteriaceae</taxon>
        <taxon>Mycolicibacterium</taxon>
    </lineage>
</organism>